<proteinExistence type="inferred from homology"/>
<protein>
    <recommendedName>
        <fullName evidence="2">Cysteine desulfurase</fullName>
        <ecNumber evidence="2">2.8.1.7</ecNumber>
    </recommendedName>
    <alternativeName>
        <fullName evidence="2">Nitrogenase metalloclusters biosynthesis protein NifS</fullName>
    </alternativeName>
</protein>
<feature type="chain" id="PRO_0000150258" description="Cysteine desulfurase">
    <location>
        <begin position="1"/>
        <end position="384"/>
    </location>
</feature>
<feature type="active site" description="Cysteine persulfide intermediate" evidence="2">
    <location>
        <position position="325"/>
    </location>
</feature>
<feature type="binding site" evidence="3">
    <location>
        <begin position="74"/>
        <end position="75"/>
    </location>
    <ligand>
        <name>pyridoxal 5'-phosphate</name>
        <dbReference type="ChEBI" id="CHEBI:597326"/>
    </ligand>
</feature>
<feature type="binding site" evidence="1">
    <location>
        <position position="154"/>
    </location>
    <ligand>
        <name>pyridoxal 5'-phosphate</name>
        <dbReference type="ChEBI" id="CHEBI:597326"/>
    </ligand>
</feature>
<feature type="binding site" evidence="3">
    <location>
        <position position="180"/>
    </location>
    <ligand>
        <name>pyridoxal 5'-phosphate</name>
        <dbReference type="ChEBI" id="CHEBI:597326"/>
    </ligand>
</feature>
<feature type="binding site" evidence="3">
    <location>
        <begin position="200"/>
        <end position="202"/>
    </location>
    <ligand>
        <name>pyridoxal 5'-phosphate</name>
        <dbReference type="ChEBI" id="CHEBI:597326"/>
    </ligand>
</feature>
<feature type="binding site" evidence="3">
    <location>
        <position position="238"/>
    </location>
    <ligand>
        <name>pyridoxal 5'-phosphate</name>
        <dbReference type="ChEBI" id="CHEBI:597326"/>
    </ligand>
</feature>
<feature type="binding site" description="via persulfide group" evidence="1">
    <location>
        <position position="325"/>
    </location>
    <ligand>
        <name>[2Fe-2S] cluster</name>
        <dbReference type="ChEBI" id="CHEBI:190135"/>
    </ligand>
</feature>
<feature type="modified residue" description="N6-(pyridoxal phosphate)lysine" evidence="3">
    <location>
        <position position="203"/>
    </location>
</feature>
<name>NIFS_RHOCA</name>
<organism>
    <name type="scientific">Rhodobacter capsulatus</name>
    <name type="common">Rhodopseudomonas capsulata</name>
    <dbReference type="NCBI Taxonomy" id="1061"/>
    <lineage>
        <taxon>Bacteria</taxon>
        <taxon>Pseudomonadati</taxon>
        <taxon>Pseudomonadota</taxon>
        <taxon>Alphaproteobacteria</taxon>
        <taxon>Rhodobacterales</taxon>
        <taxon>Rhodobacter group</taxon>
        <taxon>Rhodobacter</taxon>
    </lineage>
</organism>
<sequence length="384" mass="40282">MTQPAIYLDNNATTRVFPEVVAAMLPYFTEHFGNASSGHGFGAQAGLGLRKARLAVAALIGAASEQEILFTSGGTEANTTAIRSALAVQDGRREIIISAVEHPAILMLAADLEKTEGVRVHRIPVDHLGRLDLAAYRAALSDRVAVASIMWANNRYDLPVPQLAAEAHAAGALFHTDAVQAVGKLPMSLADTEIDMLSLSGHKFHGPKGVGALYLRKGVAFRPLLRGGKQERGRRAGTENVPALVGMGLAAEIVAARMAADLSRIATLRDWLESGILALGGCQRLGDPANRLANTCTLAFDRIDSEAVLTKLARAGIAISTGSACASGAMEPSHVTRAMAVPFTAAHGVVRFSLSADTTAAELSRVLAILPEILAELRPVPVTA</sequence>
<dbReference type="EC" id="2.8.1.7" evidence="2"/>
<dbReference type="EMBL" id="X68444">
    <property type="protein sequence ID" value="CAA48487.1"/>
    <property type="molecule type" value="Genomic_DNA"/>
</dbReference>
<dbReference type="PIR" id="S34816">
    <property type="entry name" value="S34816"/>
</dbReference>
<dbReference type="SMR" id="Q07177"/>
<dbReference type="GO" id="GO:0031071">
    <property type="term" value="F:cysteine desulfurase activity"/>
    <property type="evidence" value="ECO:0007669"/>
    <property type="project" value="UniProtKB-EC"/>
</dbReference>
<dbReference type="GO" id="GO:0051536">
    <property type="term" value="F:iron-sulfur cluster binding"/>
    <property type="evidence" value="ECO:0007669"/>
    <property type="project" value="UniProtKB-KW"/>
</dbReference>
<dbReference type="GO" id="GO:0046872">
    <property type="term" value="F:metal ion binding"/>
    <property type="evidence" value="ECO:0007669"/>
    <property type="project" value="UniProtKB-KW"/>
</dbReference>
<dbReference type="GO" id="GO:0009399">
    <property type="term" value="P:nitrogen fixation"/>
    <property type="evidence" value="ECO:0007669"/>
    <property type="project" value="UniProtKB-KW"/>
</dbReference>
<dbReference type="FunFam" id="3.40.640.10:FF:000084">
    <property type="entry name" value="IscS-like cysteine desulfurase"/>
    <property type="match status" value="1"/>
</dbReference>
<dbReference type="Gene3D" id="1.10.260.50">
    <property type="match status" value="1"/>
</dbReference>
<dbReference type="Gene3D" id="3.90.1150.10">
    <property type="entry name" value="Aspartate Aminotransferase, domain 1"/>
    <property type="match status" value="1"/>
</dbReference>
<dbReference type="Gene3D" id="3.40.640.10">
    <property type="entry name" value="Type I PLP-dependent aspartate aminotransferase-like (Major domain)"/>
    <property type="match status" value="1"/>
</dbReference>
<dbReference type="InterPro" id="IPR000192">
    <property type="entry name" value="Aminotrans_V_dom"/>
</dbReference>
<dbReference type="InterPro" id="IPR020578">
    <property type="entry name" value="Aminotrans_V_PyrdxlP_BS"/>
</dbReference>
<dbReference type="InterPro" id="IPR016454">
    <property type="entry name" value="Cysteine_dSase"/>
</dbReference>
<dbReference type="InterPro" id="IPR015424">
    <property type="entry name" value="PyrdxlP-dep_Trfase"/>
</dbReference>
<dbReference type="InterPro" id="IPR015421">
    <property type="entry name" value="PyrdxlP-dep_Trfase_major"/>
</dbReference>
<dbReference type="InterPro" id="IPR015422">
    <property type="entry name" value="PyrdxlP-dep_Trfase_small"/>
</dbReference>
<dbReference type="PANTHER" id="PTHR11601:SF34">
    <property type="entry name" value="CYSTEINE DESULFURASE"/>
    <property type="match status" value="1"/>
</dbReference>
<dbReference type="PANTHER" id="PTHR11601">
    <property type="entry name" value="CYSTEINE DESULFURYLASE FAMILY MEMBER"/>
    <property type="match status" value="1"/>
</dbReference>
<dbReference type="Pfam" id="PF00266">
    <property type="entry name" value="Aminotran_5"/>
    <property type="match status" value="1"/>
</dbReference>
<dbReference type="PIRSF" id="PIRSF005572">
    <property type="entry name" value="NifS"/>
    <property type="match status" value="1"/>
</dbReference>
<dbReference type="SUPFAM" id="SSF53383">
    <property type="entry name" value="PLP-dependent transferases"/>
    <property type="match status" value="1"/>
</dbReference>
<dbReference type="PROSITE" id="PS00595">
    <property type="entry name" value="AA_TRANSFER_CLASS_5"/>
    <property type="match status" value="1"/>
</dbReference>
<gene>
    <name evidence="2" type="primary">nifS</name>
</gene>
<keyword id="KW-0408">Iron</keyword>
<keyword id="KW-0411">Iron-sulfur</keyword>
<keyword id="KW-0479">Metal-binding</keyword>
<keyword id="KW-0535">Nitrogen fixation</keyword>
<keyword id="KW-0663">Pyridoxal phosphate</keyword>
<keyword id="KW-0808">Transferase</keyword>
<comment type="function">
    <text evidence="2">Catalyzes the removal of elemental sulfur atoms from cysteine to produce alanine. Seems to participate in the biosynthesis of the nitrogenase metalloclusters by providing the inorganic sulfur required for the Fe-S core formation.</text>
</comment>
<comment type="catalytic activity">
    <reaction evidence="2">
        <text>(sulfur carrier)-H + L-cysteine = (sulfur carrier)-SH + L-alanine</text>
        <dbReference type="Rhea" id="RHEA:43892"/>
        <dbReference type="Rhea" id="RHEA-COMP:14737"/>
        <dbReference type="Rhea" id="RHEA-COMP:14739"/>
        <dbReference type="ChEBI" id="CHEBI:29917"/>
        <dbReference type="ChEBI" id="CHEBI:35235"/>
        <dbReference type="ChEBI" id="CHEBI:57972"/>
        <dbReference type="ChEBI" id="CHEBI:64428"/>
        <dbReference type="EC" id="2.8.1.7"/>
    </reaction>
</comment>
<comment type="cofactor">
    <cofactor evidence="2">
        <name>pyridoxal 5'-phosphate</name>
        <dbReference type="ChEBI" id="CHEBI:597326"/>
    </cofactor>
</comment>
<comment type="subunit">
    <text evidence="2">Homodimer.</text>
</comment>
<comment type="similarity">
    <text evidence="4">Belongs to the class-V pyridoxal-phosphate-dependent aminotransferase family. NifS/IscS subfamily.</text>
</comment>
<reference key="1">
    <citation type="journal article" date="1993" name="Mol. Gen. Genet.">
        <title>Nucleotide sequence and genetic analysis of the Rhodobacter capsulatus ORF6-nifUI SVW gene region: possible role of NifW in homocitrate processing.</title>
        <authorList>
            <person name="Masepohl B."/>
            <person name="Angermueller S."/>
            <person name="Hennecke S."/>
            <person name="Huebner P."/>
            <person name="Moreno-Vivian C."/>
            <person name="Klipp W."/>
        </authorList>
    </citation>
    <scope>NUCLEOTIDE SEQUENCE [GENOMIC DNA]</scope>
    <source>
        <strain>ATCC 33303 / B10</strain>
    </source>
</reference>
<evidence type="ECO:0000250" key="1">
    <source>
        <dbReference type="UniProtKB" id="O29689"/>
    </source>
</evidence>
<evidence type="ECO:0000250" key="2">
    <source>
        <dbReference type="UniProtKB" id="P05341"/>
    </source>
</evidence>
<evidence type="ECO:0000250" key="3">
    <source>
        <dbReference type="UniProtKB" id="P0A6B9"/>
    </source>
</evidence>
<evidence type="ECO:0000305" key="4"/>
<accession>Q07177</accession>